<reference key="1">
    <citation type="journal article" date="2005" name="J. Bacteriol.">
        <title>Whole-genome sequencing of Staphylococcus haemolyticus uncovers the extreme plasticity of its genome and the evolution of human-colonizing staphylococcal species.</title>
        <authorList>
            <person name="Takeuchi F."/>
            <person name="Watanabe S."/>
            <person name="Baba T."/>
            <person name="Yuzawa H."/>
            <person name="Ito T."/>
            <person name="Morimoto Y."/>
            <person name="Kuroda M."/>
            <person name="Cui L."/>
            <person name="Takahashi M."/>
            <person name="Ankai A."/>
            <person name="Baba S."/>
            <person name="Fukui S."/>
            <person name="Lee J.C."/>
            <person name="Hiramatsu K."/>
        </authorList>
    </citation>
    <scope>NUCLEOTIDE SEQUENCE [LARGE SCALE GENOMIC DNA]</scope>
    <source>
        <strain>JCSC1435</strain>
    </source>
</reference>
<name>HRTA_STAHJ</name>
<dbReference type="EC" id="7.6.2.-"/>
<dbReference type="EMBL" id="AP006716">
    <property type="protein sequence ID" value="BAE04008.1"/>
    <property type="molecule type" value="Genomic_DNA"/>
</dbReference>
<dbReference type="RefSeq" id="WP_011275024.1">
    <property type="nucleotide sequence ID" value="NC_007168.1"/>
</dbReference>
<dbReference type="SMR" id="Q4L8L7"/>
<dbReference type="KEGG" id="sha:SH0699"/>
<dbReference type="eggNOG" id="COG1136">
    <property type="taxonomic scope" value="Bacteria"/>
</dbReference>
<dbReference type="HOGENOM" id="CLU_000604_1_22_9"/>
<dbReference type="OrthoDB" id="9791546at2"/>
<dbReference type="Proteomes" id="UP000000543">
    <property type="component" value="Chromosome"/>
</dbReference>
<dbReference type="GO" id="GO:0005886">
    <property type="term" value="C:plasma membrane"/>
    <property type="evidence" value="ECO:0007669"/>
    <property type="project" value="UniProtKB-SubCell"/>
</dbReference>
<dbReference type="GO" id="GO:0005524">
    <property type="term" value="F:ATP binding"/>
    <property type="evidence" value="ECO:0007669"/>
    <property type="project" value="UniProtKB-KW"/>
</dbReference>
<dbReference type="GO" id="GO:0016887">
    <property type="term" value="F:ATP hydrolysis activity"/>
    <property type="evidence" value="ECO:0007669"/>
    <property type="project" value="InterPro"/>
</dbReference>
<dbReference type="GO" id="GO:0022857">
    <property type="term" value="F:transmembrane transporter activity"/>
    <property type="evidence" value="ECO:0007669"/>
    <property type="project" value="TreeGrafter"/>
</dbReference>
<dbReference type="CDD" id="cd03255">
    <property type="entry name" value="ABC_MJ0796_LolCDE_FtsE"/>
    <property type="match status" value="1"/>
</dbReference>
<dbReference type="FunFam" id="3.40.50.300:FF:000032">
    <property type="entry name" value="Export ABC transporter ATP-binding protein"/>
    <property type="match status" value="1"/>
</dbReference>
<dbReference type="Gene3D" id="3.40.50.300">
    <property type="entry name" value="P-loop containing nucleotide triphosphate hydrolases"/>
    <property type="match status" value="1"/>
</dbReference>
<dbReference type="InterPro" id="IPR003593">
    <property type="entry name" value="AAA+_ATPase"/>
</dbReference>
<dbReference type="InterPro" id="IPR003439">
    <property type="entry name" value="ABC_transporter-like_ATP-bd"/>
</dbReference>
<dbReference type="InterPro" id="IPR015854">
    <property type="entry name" value="ABC_transpr_LolD-like"/>
</dbReference>
<dbReference type="InterPro" id="IPR017911">
    <property type="entry name" value="MacB-like_ATP-bd"/>
</dbReference>
<dbReference type="InterPro" id="IPR027417">
    <property type="entry name" value="P-loop_NTPase"/>
</dbReference>
<dbReference type="PANTHER" id="PTHR24220:SF666">
    <property type="entry name" value="HEMIN IMPORT ATP-BINDING PROTEIN HRTA-RELATED"/>
    <property type="match status" value="1"/>
</dbReference>
<dbReference type="PANTHER" id="PTHR24220">
    <property type="entry name" value="IMPORT ATP-BINDING PROTEIN"/>
    <property type="match status" value="1"/>
</dbReference>
<dbReference type="Pfam" id="PF00005">
    <property type="entry name" value="ABC_tran"/>
    <property type="match status" value="1"/>
</dbReference>
<dbReference type="SMART" id="SM00382">
    <property type="entry name" value="AAA"/>
    <property type="match status" value="1"/>
</dbReference>
<dbReference type="SUPFAM" id="SSF52540">
    <property type="entry name" value="P-loop containing nucleoside triphosphate hydrolases"/>
    <property type="match status" value="1"/>
</dbReference>
<dbReference type="PROSITE" id="PS50893">
    <property type="entry name" value="ABC_TRANSPORTER_2"/>
    <property type="match status" value="1"/>
</dbReference>
<organism>
    <name type="scientific">Staphylococcus haemolyticus (strain JCSC1435)</name>
    <dbReference type="NCBI Taxonomy" id="279808"/>
    <lineage>
        <taxon>Bacteria</taxon>
        <taxon>Bacillati</taxon>
        <taxon>Bacillota</taxon>
        <taxon>Bacilli</taxon>
        <taxon>Bacillales</taxon>
        <taxon>Staphylococcaceae</taxon>
        <taxon>Staphylococcus</taxon>
    </lineage>
</organism>
<comment type="function">
    <text evidence="1">Part of the ABC transporter complex hrt involved in hemin import. Responsible for energy coupling to the transport system (By similarity).</text>
</comment>
<comment type="subunit">
    <text evidence="1">The complex is composed of two ATP-binding proteins (HrtA), two transmembrane proteins (HrtB) and a solute-binding protein.</text>
</comment>
<comment type="subcellular location">
    <subcellularLocation>
        <location evidence="3">Cell membrane</location>
        <topology evidence="3">Peripheral membrane protein</topology>
    </subcellularLocation>
</comment>
<comment type="similarity">
    <text evidence="3">Belongs to the ABC transporter superfamily. HrtA family.</text>
</comment>
<sequence>MALQLKHITKTFGNGDAQTEVLKNINFSVNQGEFIILSGASGSGKSTLLNILGGLLSPSSGDVLYKGENLFSKEVDKTSLRLNDIGFIFQSSHLVPYLTVREQLMIVAKEAGIKRKEAKDKAQRLLNEIGLSHRLDVYPHLLSGGEKQRVAIMRAFMNEPKIILADEPTASLDADRATSVVQMIKAHVQTKNMIGIMITHDKRLFEYADRVIEIQDGKIEL</sequence>
<protein>
    <recommendedName>
        <fullName>Putative hemin import ATP-binding protein HrtA</fullName>
        <ecNumber>7.6.2.-</ecNumber>
    </recommendedName>
</protein>
<accession>Q4L8L7</accession>
<gene>
    <name type="primary">hrtA</name>
    <name type="ordered locus">SH0699</name>
</gene>
<keyword id="KW-0067">ATP-binding</keyword>
<keyword id="KW-1003">Cell membrane</keyword>
<keyword id="KW-0472">Membrane</keyword>
<keyword id="KW-0547">Nucleotide-binding</keyword>
<keyword id="KW-1278">Translocase</keyword>
<keyword id="KW-0813">Transport</keyword>
<feature type="chain" id="PRO_0000270139" description="Putative hemin import ATP-binding protein HrtA">
    <location>
        <begin position="1"/>
        <end position="221"/>
    </location>
</feature>
<feature type="domain" description="ABC transporter" evidence="2">
    <location>
        <begin position="3"/>
        <end position="221"/>
    </location>
</feature>
<feature type="binding site" evidence="2">
    <location>
        <begin position="39"/>
        <end position="46"/>
    </location>
    <ligand>
        <name>ATP</name>
        <dbReference type="ChEBI" id="CHEBI:30616"/>
    </ligand>
</feature>
<evidence type="ECO:0000250" key="1"/>
<evidence type="ECO:0000255" key="2">
    <source>
        <dbReference type="PROSITE-ProRule" id="PRU00434"/>
    </source>
</evidence>
<evidence type="ECO:0000305" key="3"/>
<proteinExistence type="inferred from homology"/>